<name>LEU11_CALS4</name>
<dbReference type="EC" id="2.3.3.13" evidence="1"/>
<dbReference type="EMBL" id="AE008691">
    <property type="protein sequence ID" value="AAM23333.1"/>
    <property type="molecule type" value="Genomic_DNA"/>
</dbReference>
<dbReference type="RefSeq" id="WP_011024550.1">
    <property type="nucleotide sequence ID" value="NC_003869.1"/>
</dbReference>
<dbReference type="SMR" id="Q8RDK3"/>
<dbReference type="STRING" id="273068.TTE0016"/>
<dbReference type="KEGG" id="tte:TTE0016"/>
<dbReference type="eggNOG" id="COG0119">
    <property type="taxonomic scope" value="Bacteria"/>
</dbReference>
<dbReference type="HOGENOM" id="CLU_022158_3_1_9"/>
<dbReference type="OrthoDB" id="9804858at2"/>
<dbReference type="UniPathway" id="UPA00048">
    <property type="reaction ID" value="UER00070"/>
</dbReference>
<dbReference type="Proteomes" id="UP000000555">
    <property type="component" value="Chromosome"/>
</dbReference>
<dbReference type="GO" id="GO:0005737">
    <property type="term" value="C:cytoplasm"/>
    <property type="evidence" value="ECO:0007669"/>
    <property type="project" value="UniProtKB-SubCell"/>
</dbReference>
<dbReference type="GO" id="GO:0003852">
    <property type="term" value="F:2-isopropylmalate synthase activity"/>
    <property type="evidence" value="ECO:0007669"/>
    <property type="project" value="UniProtKB-EC"/>
</dbReference>
<dbReference type="GO" id="GO:0046872">
    <property type="term" value="F:metal ion binding"/>
    <property type="evidence" value="ECO:0007669"/>
    <property type="project" value="UniProtKB-KW"/>
</dbReference>
<dbReference type="GO" id="GO:0009098">
    <property type="term" value="P:L-leucine biosynthetic process"/>
    <property type="evidence" value="ECO:0007669"/>
    <property type="project" value="UniProtKB-UniPathway"/>
</dbReference>
<dbReference type="CDD" id="cd07940">
    <property type="entry name" value="DRE_TIM_IPMS"/>
    <property type="match status" value="1"/>
</dbReference>
<dbReference type="FunFam" id="1.10.238.260:FF:000001">
    <property type="entry name" value="2-isopropylmalate synthase"/>
    <property type="match status" value="1"/>
</dbReference>
<dbReference type="FunFam" id="3.20.20.70:FF:000010">
    <property type="entry name" value="2-isopropylmalate synthase"/>
    <property type="match status" value="1"/>
</dbReference>
<dbReference type="Gene3D" id="1.10.238.260">
    <property type="match status" value="1"/>
</dbReference>
<dbReference type="Gene3D" id="3.20.20.70">
    <property type="entry name" value="Aldolase class I"/>
    <property type="match status" value="1"/>
</dbReference>
<dbReference type="InterPro" id="IPR050073">
    <property type="entry name" value="2-IPM_HCS-like"/>
</dbReference>
<dbReference type="InterPro" id="IPR002034">
    <property type="entry name" value="AIPM/Hcit_synth_CS"/>
</dbReference>
<dbReference type="InterPro" id="IPR013785">
    <property type="entry name" value="Aldolase_TIM"/>
</dbReference>
<dbReference type="InterPro" id="IPR054691">
    <property type="entry name" value="LeuA/HCS_post-cat"/>
</dbReference>
<dbReference type="InterPro" id="IPR000891">
    <property type="entry name" value="PYR_CT"/>
</dbReference>
<dbReference type="NCBIfam" id="NF002086">
    <property type="entry name" value="PRK00915.1-3"/>
    <property type="match status" value="1"/>
</dbReference>
<dbReference type="PANTHER" id="PTHR10277:SF9">
    <property type="entry name" value="2-ISOPROPYLMALATE SYNTHASE 1, CHLOROPLASTIC-RELATED"/>
    <property type="match status" value="1"/>
</dbReference>
<dbReference type="PANTHER" id="PTHR10277">
    <property type="entry name" value="HOMOCITRATE SYNTHASE-RELATED"/>
    <property type="match status" value="1"/>
</dbReference>
<dbReference type="Pfam" id="PF22617">
    <property type="entry name" value="HCS_D2"/>
    <property type="match status" value="1"/>
</dbReference>
<dbReference type="Pfam" id="PF00682">
    <property type="entry name" value="HMGL-like"/>
    <property type="match status" value="1"/>
</dbReference>
<dbReference type="SUPFAM" id="SSF51569">
    <property type="entry name" value="Aldolase"/>
    <property type="match status" value="1"/>
</dbReference>
<dbReference type="PROSITE" id="PS00815">
    <property type="entry name" value="AIPM_HOMOCIT_SYNTH_1"/>
    <property type="match status" value="1"/>
</dbReference>
<dbReference type="PROSITE" id="PS00816">
    <property type="entry name" value="AIPM_HOMOCIT_SYNTH_2"/>
    <property type="match status" value="1"/>
</dbReference>
<dbReference type="PROSITE" id="PS50991">
    <property type="entry name" value="PYR_CT"/>
    <property type="match status" value="1"/>
</dbReference>
<comment type="function">
    <text evidence="1">Catalyzes the condensation of the acetyl group of acetyl-CoA with 3-methyl-2-oxobutanoate (2-ketoisovalerate) to form 3-carboxy-3-hydroxy-4-methylpentanoate (2-isopropylmalate).</text>
</comment>
<comment type="catalytic activity">
    <reaction evidence="1">
        <text>3-methyl-2-oxobutanoate + acetyl-CoA + H2O = (2S)-2-isopropylmalate + CoA + H(+)</text>
        <dbReference type="Rhea" id="RHEA:21524"/>
        <dbReference type="ChEBI" id="CHEBI:1178"/>
        <dbReference type="ChEBI" id="CHEBI:11851"/>
        <dbReference type="ChEBI" id="CHEBI:15377"/>
        <dbReference type="ChEBI" id="CHEBI:15378"/>
        <dbReference type="ChEBI" id="CHEBI:57287"/>
        <dbReference type="ChEBI" id="CHEBI:57288"/>
        <dbReference type="EC" id="2.3.3.13"/>
    </reaction>
</comment>
<comment type="cofactor">
    <cofactor evidence="1">
        <name>Mn(2+)</name>
        <dbReference type="ChEBI" id="CHEBI:29035"/>
    </cofactor>
</comment>
<comment type="pathway">
    <text evidence="1">Amino-acid biosynthesis; L-leucine biosynthesis; L-leucine from 3-methyl-2-oxobutanoate: step 1/4.</text>
</comment>
<comment type="subunit">
    <text evidence="1">Homodimer.</text>
</comment>
<comment type="subcellular location">
    <subcellularLocation>
        <location evidence="1">Cytoplasm</location>
    </subcellularLocation>
</comment>
<comment type="similarity">
    <text evidence="4">Belongs to the alpha-IPM synthase/homocitrate synthase family. LeuA type 1 subfamily.</text>
</comment>
<sequence>MGVKRVIVFDTTLRDGEQTPGVNFNSRDKLEIAYQLAKLGVDVIEAGFPAASNGDFEAVKNIADYVKGVTIAAMGRAVKEDIDRASSALKNAEKSRLHVFIATSDIHLQYKLKMTRDEVLKKAVEMVKYARGKFDEIEFSAEDASRTDWDFLVKVFSEVIDAGAHIINVPDTVGYAMPREYGELIRYIRNNVPNIDGVTISAHCHNDLGLAVANSLSAIENGATQVEVTVNGIGERAGNAAMEEVIMALNTRKDYFGLVHGINTKEIYNTSKLVSELTGIKLQPNKAIVGANAFRHQSGIHQHGVINNRLTYEIMRPEDIGVVPDTFALGKLSGRNAFELKVRQLGYNLSPGEISEAFRKFKDLADRKKTIVEEDIRFVVEETIEEFRGFREGEAWA</sequence>
<gene>
    <name evidence="3" type="primary">leuA1</name>
    <name type="ordered locus">TTE0016</name>
</gene>
<reference key="1">
    <citation type="journal article" date="2002" name="Genome Res.">
        <title>A complete sequence of the T. tengcongensis genome.</title>
        <authorList>
            <person name="Bao Q."/>
            <person name="Tian Y."/>
            <person name="Li W."/>
            <person name="Xu Z."/>
            <person name="Xuan Z."/>
            <person name="Hu S."/>
            <person name="Dong W."/>
            <person name="Yang J."/>
            <person name="Chen Y."/>
            <person name="Xue Y."/>
            <person name="Xu Y."/>
            <person name="Lai X."/>
            <person name="Huang L."/>
            <person name="Dong X."/>
            <person name="Ma Y."/>
            <person name="Ling L."/>
            <person name="Tan H."/>
            <person name="Chen R."/>
            <person name="Wang J."/>
            <person name="Yu J."/>
            <person name="Yang H."/>
        </authorList>
    </citation>
    <scope>NUCLEOTIDE SEQUENCE [LARGE SCALE GENOMIC DNA]</scope>
    <source>
        <strain>DSM 15242 / JCM 11007 / NBRC 100824 / MB4</strain>
    </source>
</reference>
<organism>
    <name type="scientific">Caldanaerobacter subterraneus subsp. tengcongensis (strain DSM 15242 / JCM 11007 / NBRC 100824 / MB4)</name>
    <name type="common">Thermoanaerobacter tengcongensis</name>
    <dbReference type="NCBI Taxonomy" id="273068"/>
    <lineage>
        <taxon>Bacteria</taxon>
        <taxon>Bacillati</taxon>
        <taxon>Bacillota</taxon>
        <taxon>Clostridia</taxon>
        <taxon>Thermoanaerobacterales</taxon>
        <taxon>Thermoanaerobacteraceae</taxon>
        <taxon>Caldanaerobacter</taxon>
    </lineage>
</organism>
<protein>
    <recommendedName>
        <fullName evidence="1">2-isopropylmalate synthase 1</fullName>
        <ecNumber evidence="1">2.3.3.13</ecNumber>
    </recommendedName>
    <alternativeName>
        <fullName evidence="1">Alpha-IPM synthase 1</fullName>
    </alternativeName>
    <alternativeName>
        <fullName evidence="1">Alpha-isopropylmalate synthase 1</fullName>
    </alternativeName>
</protein>
<accession>Q8RDK3</accession>
<evidence type="ECO:0000250" key="1">
    <source>
        <dbReference type="UniProtKB" id="Q9JZG1"/>
    </source>
</evidence>
<evidence type="ECO:0000255" key="2">
    <source>
        <dbReference type="PROSITE-ProRule" id="PRU01151"/>
    </source>
</evidence>
<evidence type="ECO:0000303" key="3">
    <source>
    </source>
</evidence>
<evidence type="ECO:0000305" key="4"/>
<keyword id="KW-0028">Amino-acid biosynthesis</keyword>
<keyword id="KW-0100">Branched-chain amino acid biosynthesis</keyword>
<keyword id="KW-0963">Cytoplasm</keyword>
<keyword id="KW-0432">Leucine biosynthesis</keyword>
<keyword id="KW-0464">Manganese</keyword>
<keyword id="KW-0479">Metal-binding</keyword>
<keyword id="KW-1185">Reference proteome</keyword>
<keyword id="KW-0808">Transferase</keyword>
<feature type="chain" id="PRO_0000140393" description="2-isopropylmalate synthase 1">
    <location>
        <begin position="1"/>
        <end position="397"/>
    </location>
</feature>
<feature type="domain" description="Pyruvate carboxyltransferase" evidence="2">
    <location>
        <begin position="6"/>
        <end position="268"/>
    </location>
</feature>
<feature type="binding site" evidence="1">
    <location>
        <position position="15"/>
    </location>
    <ligand>
        <name>Mn(2+)</name>
        <dbReference type="ChEBI" id="CHEBI:29035"/>
    </ligand>
</feature>
<feature type="binding site" evidence="1">
    <location>
        <position position="203"/>
    </location>
    <ligand>
        <name>Mn(2+)</name>
        <dbReference type="ChEBI" id="CHEBI:29035"/>
    </ligand>
</feature>
<feature type="binding site" evidence="1">
    <location>
        <position position="205"/>
    </location>
    <ligand>
        <name>Mn(2+)</name>
        <dbReference type="ChEBI" id="CHEBI:29035"/>
    </ligand>
</feature>
<feature type="binding site" evidence="1">
    <location>
        <position position="239"/>
    </location>
    <ligand>
        <name>Mn(2+)</name>
        <dbReference type="ChEBI" id="CHEBI:29035"/>
    </ligand>
</feature>
<proteinExistence type="inferred from homology"/>